<protein>
    <recommendedName>
        <fullName>Calmodulin-binding transcription activator CBT</fullName>
    </recommendedName>
    <alternativeName>
        <fullName evidence="5">CaM-binding transcription factor</fullName>
        <shortName evidence="5">OsCBT</shortName>
    </alternativeName>
</protein>
<comment type="function">
    <text evidence="4">Transcription activator that binds calmodulin in a calcium-dependent manner in vitro. Binds to the DNA consensus sequence 5'-T[AC]CG[CT]GT[GT][GT][GT][GT]T[GT]CG-3'.</text>
</comment>
<comment type="activity regulation">
    <text evidence="4">Transcriptional activation activity is strongly reduced by calmodulin.</text>
</comment>
<comment type="subcellular location">
    <subcellularLocation>
        <location evidence="3 4">Nucleus</location>
    </subcellularLocation>
</comment>
<comment type="similarity">
    <text evidence="6">Belongs to the CAMTA family.</text>
</comment>
<feature type="chain" id="PRO_0000442291" description="Calmodulin-binding transcription activator CBT">
    <location>
        <begin position="1"/>
        <end position="927"/>
    </location>
</feature>
<feature type="repeat" description="ANK" evidence="1">
    <location>
        <begin position="609"/>
        <end position="638"/>
    </location>
</feature>
<feature type="domain" description="IQ 1" evidence="2">
    <location>
        <begin position="757"/>
        <end position="786"/>
    </location>
</feature>
<feature type="domain" description="IQ 2" evidence="2">
    <location>
        <begin position="799"/>
        <end position="828"/>
    </location>
</feature>
<feature type="domain" description="IQ 3" evidence="2">
    <location>
        <begin position="882"/>
        <end position="911"/>
    </location>
</feature>
<feature type="DNA-binding region" description="CG-1" evidence="3">
    <location>
        <begin position="26"/>
        <end position="152"/>
    </location>
</feature>
<feature type="region of interest" description="Necessary and sufficient for nuclear localization" evidence="4">
    <location>
        <begin position="70"/>
        <end position="96"/>
    </location>
</feature>
<feature type="region of interest" description="Calmodulin-binding" evidence="4">
    <location>
        <begin position="826"/>
        <end position="845"/>
    </location>
</feature>
<feature type="region of interest" description="Necessary and sufficient for nuclear localization" evidence="4">
    <location>
        <begin position="830"/>
        <end position="851"/>
    </location>
</feature>
<feature type="short sequence motif" description="Nuclear localization signal" evidence="3">
    <location>
        <begin position="72"/>
        <end position="79"/>
    </location>
</feature>
<feature type="mutagenesis site" description="Abolishes calmodulin binding." evidence="4">
    <original>I</original>
    <variation>E</variation>
    <location>
        <position position="764"/>
    </location>
</feature>
<feature type="mutagenesis site" description="Abolishes calmodulin binding; when associated with R-836." evidence="4">
    <original>V</original>
    <variation>R</variation>
    <location>
        <position position="829"/>
    </location>
</feature>
<feature type="mutagenesis site" description="Abolishes calmodulin binding; when associated with R-829." evidence="4">
    <original>W</original>
    <variation>R</variation>
    <location>
        <position position="836"/>
    </location>
</feature>
<feature type="sequence conflict" description="In Ref. 1; AAQ07306." evidence="6" ref="1">
    <original>E</original>
    <variation>D</variation>
    <location>
        <position position="27"/>
    </location>
</feature>
<feature type="sequence conflict" description="In Ref. 1; AAQ07306." evidence="6" ref="1">
    <original>D</original>
    <variation>N</variation>
    <location>
        <position position="119"/>
    </location>
</feature>
<feature type="sequence conflict" description="In Ref. 1; AAQ07306." evidence="6" ref="1">
    <original>AP</original>
    <variation>VL</variation>
    <location>
        <begin position="153"/>
        <end position="154"/>
    </location>
</feature>
<feature type="sequence conflict" description="In Ref. 1; AAQ07306." evidence="6" ref="1">
    <original>SP</original>
    <variation>FL</variation>
    <location>
        <begin position="174"/>
        <end position="175"/>
    </location>
</feature>
<feature type="sequence conflict" description="In Ref. 1; AAQ07306." evidence="6" ref="1">
    <original>S</original>
    <variation>I</variation>
    <location>
        <position position="340"/>
    </location>
</feature>
<feature type="sequence conflict" description="In Ref. 1; AAQ07306." evidence="6" ref="1">
    <original>K</original>
    <variation>N</variation>
    <location>
        <position position="345"/>
    </location>
</feature>
<feature type="sequence conflict" description="In Ref. 1; AAQ07306." evidence="6" ref="1">
    <original>E</original>
    <variation>D</variation>
    <location>
        <position position="388"/>
    </location>
</feature>
<feature type="sequence conflict" description="In Ref. 1; AAQ07306." evidence="6" ref="1">
    <original>K</original>
    <variation>N</variation>
    <location>
        <position position="403"/>
    </location>
</feature>
<feature type="sequence conflict" description="In Ref. 1; AAQ07306." evidence="6" ref="1">
    <original>M</original>
    <variation>L</variation>
    <location>
        <position position="762"/>
    </location>
</feature>
<feature type="sequence conflict" description="In Ref. 1; AAQ07306." evidence="6" ref="1">
    <original>G</original>
    <variation>A</variation>
    <location>
        <position position="842"/>
    </location>
</feature>
<accession>Q7XHR2</accession>
<accession>Q2WEL1</accession>
<evidence type="ECO:0000255" key="1"/>
<evidence type="ECO:0000255" key="2">
    <source>
        <dbReference type="PROSITE-ProRule" id="PRU00116"/>
    </source>
</evidence>
<evidence type="ECO:0000255" key="3">
    <source>
        <dbReference type="PROSITE-ProRule" id="PRU00767"/>
    </source>
</evidence>
<evidence type="ECO:0000269" key="4">
    <source>
    </source>
</evidence>
<evidence type="ECO:0000303" key="5">
    <source>
    </source>
</evidence>
<evidence type="ECO:0000305" key="6"/>
<evidence type="ECO:0000312" key="7">
    <source>
        <dbReference type="EMBL" id="BAC80067.1"/>
    </source>
</evidence>
<evidence type="ECO:0000312" key="8">
    <source>
        <dbReference type="EMBL" id="BAF21586.1"/>
    </source>
</evidence>
<dbReference type="EMBL" id="AF499741">
    <property type="protein sequence ID" value="AAQ07306.1"/>
    <property type="molecule type" value="mRNA"/>
</dbReference>
<dbReference type="EMBL" id="AP005190">
    <property type="protein sequence ID" value="BAC80067.1"/>
    <property type="molecule type" value="Genomic_DNA"/>
</dbReference>
<dbReference type="EMBL" id="AP008213">
    <property type="protein sequence ID" value="BAF21586.1"/>
    <property type="molecule type" value="Genomic_DNA"/>
</dbReference>
<dbReference type="EMBL" id="AP014963">
    <property type="protein sequence ID" value="BAT01546.1"/>
    <property type="molecule type" value="Genomic_DNA"/>
</dbReference>
<dbReference type="SMR" id="Q7XHR2"/>
<dbReference type="FunCoup" id="Q7XHR2">
    <property type="interactions" value="457"/>
</dbReference>
<dbReference type="STRING" id="39947.Q7XHR2"/>
<dbReference type="PaxDb" id="39947-Q7XHR2"/>
<dbReference type="EnsemblPlants" id="Os07t0490200-01">
    <property type="protein sequence ID" value="Os07t0490200-01"/>
    <property type="gene ID" value="Os07g0490200"/>
</dbReference>
<dbReference type="Gramene" id="Os07t0490200-01">
    <property type="protein sequence ID" value="Os07t0490200-01"/>
    <property type="gene ID" value="Os07g0490200"/>
</dbReference>
<dbReference type="KEGG" id="dosa:Os07g0490200"/>
<dbReference type="KEGG" id="osa:4343265"/>
<dbReference type="eggNOG" id="KOG0520">
    <property type="taxonomic scope" value="Eukaryota"/>
</dbReference>
<dbReference type="HOGENOM" id="CLU_005708_1_0_1"/>
<dbReference type="InParanoid" id="Q7XHR2"/>
<dbReference type="OMA" id="LKHQGDQ"/>
<dbReference type="OrthoDB" id="407555at2759"/>
<dbReference type="Proteomes" id="UP000000763">
    <property type="component" value="Chromosome 7"/>
</dbReference>
<dbReference type="Proteomes" id="UP000059680">
    <property type="component" value="Chromosome 7"/>
</dbReference>
<dbReference type="ExpressionAtlas" id="Q7XHR2">
    <property type="expression patterns" value="baseline and differential"/>
</dbReference>
<dbReference type="GO" id="GO:0005634">
    <property type="term" value="C:nucleus"/>
    <property type="evidence" value="ECO:0000314"/>
    <property type="project" value="UniProtKB"/>
</dbReference>
<dbReference type="GO" id="GO:0005516">
    <property type="term" value="F:calmodulin binding"/>
    <property type="evidence" value="ECO:0000314"/>
    <property type="project" value="UniProtKB"/>
</dbReference>
<dbReference type="GO" id="GO:0003690">
    <property type="term" value="F:double-stranded DNA binding"/>
    <property type="evidence" value="ECO:0000318"/>
    <property type="project" value="GO_Central"/>
</dbReference>
<dbReference type="GO" id="GO:0043565">
    <property type="term" value="F:sequence-specific DNA binding"/>
    <property type="evidence" value="ECO:0000314"/>
    <property type="project" value="UniProtKB"/>
</dbReference>
<dbReference type="GO" id="GO:0003712">
    <property type="term" value="F:transcription coregulator activity"/>
    <property type="evidence" value="ECO:0000318"/>
    <property type="project" value="GO_Central"/>
</dbReference>
<dbReference type="GO" id="GO:0045893">
    <property type="term" value="P:positive regulation of DNA-templated transcription"/>
    <property type="evidence" value="ECO:0000314"/>
    <property type="project" value="UniProtKB"/>
</dbReference>
<dbReference type="GO" id="GO:0006357">
    <property type="term" value="P:regulation of transcription by RNA polymerase II"/>
    <property type="evidence" value="ECO:0000318"/>
    <property type="project" value="GO_Central"/>
</dbReference>
<dbReference type="CDD" id="cd23767">
    <property type="entry name" value="IQCD"/>
    <property type="match status" value="2"/>
</dbReference>
<dbReference type="FunFam" id="1.20.5.190:FF:000003">
    <property type="entry name" value="Calmodulin-binding transcription activator 2"/>
    <property type="match status" value="1"/>
</dbReference>
<dbReference type="FunFam" id="1.25.40.20:FF:000150">
    <property type="entry name" value="calmodulin-binding transcription activator 5"/>
    <property type="match status" value="1"/>
</dbReference>
<dbReference type="FunFam" id="2.60.40.10:FF:002335">
    <property type="entry name" value="Calmodulin-binding transcription activator CBT"/>
    <property type="match status" value="1"/>
</dbReference>
<dbReference type="Gene3D" id="1.20.5.190">
    <property type="match status" value="1"/>
</dbReference>
<dbReference type="Gene3D" id="1.25.40.20">
    <property type="entry name" value="Ankyrin repeat-containing domain"/>
    <property type="match status" value="1"/>
</dbReference>
<dbReference type="Gene3D" id="2.60.40.10">
    <property type="entry name" value="Immunoglobulins"/>
    <property type="match status" value="1"/>
</dbReference>
<dbReference type="InterPro" id="IPR002110">
    <property type="entry name" value="Ankyrin_rpt"/>
</dbReference>
<dbReference type="InterPro" id="IPR036770">
    <property type="entry name" value="Ankyrin_rpt-contain_sf"/>
</dbReference>
<dbReference type="InterPro" id="IPR005559">
    <property type="entry name" value="CG-1_dom"/>
</dbReference>
<dbReference type="InterPro" id="IPR013783">
    <property type="entry name" value="Ig-like_fold"/>
</dbReference>
<dbReference type="InterPro" id="IPR014756">
    <property type="entry name" value="Ig_E-set"/>
</dbReference>
<dbReference type="InterPro" id="IPR000048">
    <property type="entry name" value="IQ_motif_EF-hand-BS"/>
</dbReference>
<dbReference type="InterPro" id="IPR027417">
    <property type="entry name" value="P-loop_NTPase"/>
</dbReference>
<dbReference type="PANTHER" id="PTHR23335:SF3">
    <property type="entry name" value="CALMODULIN-BINDING TRANSCRIPTION ACTIVATOR 5"/>
    <property type="match status" value="1"/>
</dbReference>
<dbReference type="PANTHER" id="PTHR23335">
    <property type="entry name" value="CALMODULIN-BINDING TRANSCRIPTION ACTIVATOR CAMTA"/>
    <property type="match status" value="1"/>
</dbReference>
<dbReference type="Pfam" id="PF12796">
    <property type="entry name" value="Ank_2"/>
    <property type="match status" value="1"/>
</dbReference>
<dbReference type="Pfam" id="PF03859">
    <property type="entry name" value="CG-1"/>
    <property type="match status" value="1"/>
</dbReference>
<dbReference type="Pfam" id="PF00612">
    <property type="entry name" value="IQ"/>
    <property type="match status" value="3"/>
</dbReference>
<dbReference type="SMART" id="SM00248">
    <property type="entry name" value="ANK"/>
    <property type="match status" value="2"/>
</dbReference>
<dbReference type="SMART" id="SM01076">
    <property type="entry name" value="CG-1"/>
    <property type="match status" value="1"/>
</dbReference>
<dbReference type="SMART" id="SM00015">
    <property type="entry name" value="IQ"/>
    <property type="match status" value="3"/>
</dbReference>
<dbReference type="SUPFAM" id="SSF48403">
    <property type="entry name" value="Ankyrin repeat"/>
    <property type="match status" value="1"/>
</dbReference>
<dbReference type="SUPFAM" id="SSF81296">
    <property type="entry name" value="E set domains"/>
    <property type="match status" value="1"/>
</dbReference>
<dbReference type="SUPFAM" id="SSF52540">
    <property type="entry name" value="P-loop containing nucleoside triphosphate hydrolases"/>
    <property type="match status" value="1"/>
</dbReference>
<dbReference type="PROSITE" id="PS50297">
    <property type="entry name" value="ANK_REP_REGION"/>
    <property type="match status" value="1"/>
</dbReference>
<dbReference type="PROSITE" id="PS50088">
    <property type="entry name" value="ANK_REPEAT"/>
    <property type="match status" value="1"/>
</dbReference>
<dbReference type="PROSITE" id="PS51437">
    <property type="entry name" value="CG_1"/>
    <property type="match status" value="1"/>
</dbReference>
<dbReference type="PROSITE" id="PS50096">
    <property type="entry name" value="IQ"/>
    <property type="match status" value="4"/>
</dbReference>
<reference key="1">
    <citation type="journal article" date="2005" name="J. Biol. Chem.">
        <title>Isolation of a calmodulin-binding transcription factor from rice (Oryza sativa L.).</title>
        <authorList>
            <person name="Choi M.S."/>
            <person name="Kim M.C."/>
            <person name="Yoo J.H."/>
            <person name="Moon B.C."/>
            <person name="Koo S.C."/>
            <person name="Park B.O."/>
            <person name="Lee J.H."/>
            <person name="Koo Y.D."/>
            <person name="Han H.J."/>
            <person name="Lee S.Y."/>
            <person name="Chung W.S."/>
            <person name="Lim C.O."/>
            <person name="Cho M.J."/>
        </authorList>
    </citation>
    <scope>NUCLEOTIDE SEQUENCE [MRNA]</scope>
    <scope>FUNCTION</scope>
    <scope>ACTIVITY REGULATION</scope>
    <scope>SUBCELLULAR LOCATION</scope>
    <scope>CALMODULIN-BINDING</scope>
    <scope>MUTAGENESIS OF ILE-764; VAL-829 AND TRP-836</scope>
</reference>
<reference key="2">
    <citation type="journal article" date="2005" name="Nature">
        <title>The map-based sequence of the rice genome.</title>
        <authorList>
            <consortium name="International rice genome sequencing project (IRGSP)"/>
        </authorList>
    </citation>
    <scope>NUCLEOTIDE SEQUENCE [LARGE SCALE GENOMIC DNA]</scope>
    <source>
        <strain>cv. Nipponbare</strain>
    </source>
</reference>
<reference key="3">
    <citation type="journal article" date="2008" name="Nucleic Acids Res.">
        <title>The rice annotation project database (RAP-DB): 2008 update.</title>
        <authorList>
            <consortium name="The rice annotation project (RAP)"/>
        </authorList>
    </citation>
    <scope>GENOME REANNOTATION</scope>
    <source>
        <strain>cv. Nipponbare</strain>
    </source>
</reference>
<reference key="4">
    <citation type="journal article" date="2013" name="Rice">
        <title>Improvement of the Oryza sativa Nipponbare reference genome using next generation sequence and optical map data.</title>
        <authorList>
            <person name="Kawahara Y."/>
            <person name="de la Bastide M."/>
            <person name="Hamilton J.P."/>
            <person name="Kanamori H."/>
            <person name="McCombie W.R."/>
            <person name="Ouyang S."/>
            <person name="Schwartz D.C."/>
            <person name="Tanaka T."/>
            <person name="Wu J."/>
            <person name="Zhou S."/>
            <person name="Childs K.L."/>
            <person name="Davidson R.M."/>
            <person name="Lin H."/>
            <person name="Quesada-Ocampo L."/>
            <person name="Vaillancourt B."/>
            <person name="Sakai H."/>
            <person name="Lee S.S."/>
            <person name="Kim J."/>
            <person name="Numa H."/>
            <person name="Itoh T."/>
            <person name="Buell C.R."/>
            <person name="Matsumoto T."/>
        </authorList>
    </citation>
    <scope>GENOME REANNOTATION</scope>
    <source>
        <strain>cv. Nipponbare</strain>
    </source>
</reference>
<name>CBT_ORYSJ</name>
<proteinExistence type="evidence at protein level"/>
<organism>
    <name type="scientific">Oryza sativa subsp. japonica</name>
    <name type="common">Rice</name>
    <dbReference type="NCBI Taxonomy" id="39947"/>
    <lineage>
        <taxon>Eukaryota</taxon>
        <taxon>Viridiplantae</taxon>
        <taxon>Streptophyta</taxon>
        <taxon>Embryophyta</taxon>
        <taxon>Tracheophyta</taxon>
        <taxon>Spermatophyta</taxon>
        <taxon>Magnoliopsida</taxon>
        <taxon>Liliopsida</taxon>
        <taxon>Poales</taxon>
        <taxon>Poaceae</taxon>
        <taxon>BOP clade</taxon>
        <taxon>Oryzoideae</taxon>
        <taxon>Oryzeae</taxon>
        <taxon>Oryzinae</taxon>
        <taxon>Oryza</taxon>
        <taxon>Oryza sativa</taxon>
    </lineage>
</organism>
<gene>
    <name evidence="5" type="primary">CBT</name>
    <name evidence="8" type="ordered locus">Os07g0490200</name>
    <name evidence="6" type="ordered locus">LOC_Os07g30774</name>
    <name evidence="7" type="ORF">P0477A12.32</name>
</gene>
<keyword id="KW-0010">Activator</keyword>
<keyword id="KW-0040">ANK repeat</keyword>
<keyword id="KW-0106">Calcium</keyword>
<keyword id="KW-0112">Calmodulin-binding</keyword>
<keyword id="KW-0238">DNA-binding</keyword>
<keyword id="KW-0539">Nucleus</keyword>
<keyword id="KW-1185">Reference proteome</keyword>
<keyword id="KW-0677">Repeat</keyword>
<keyword id="KW-0804">Transcription</keyword>
<keyword id="KW-0805">Transcription regulation</keyword>
<sequence length="927" mass="103614">MAGAGGWDPLVGSEIHGFLTYPDLNYEKLVAEAAARWFRPNEIYAILANHARFKIHAQPVDKPVSGTVVLYDRKVVRNFRKDGHNWKKKKDGRTVQEAHEKLKIGNEERVHVYYARGEDDPNFFRRCYWLLDKDLERIVLVHYRQTAEENAMAPPNPEPEVADVPTVNLIHYTSPLTSADSTSGHTELSLPEEINSHGGISASSETGNHDSSLEEFWANLLESSIKNDPKVVTSACGGSFVSSQQINNGPKNSGNIVNTSMASNAIPALNVVSETYATNHGLNQVNANHFGALKHQGDQTQSLLASDVDSQSDQFISSSVKSPMDGNTSIPNEVPARQNSLGLWKYLDDDSPGLGDNPSSVPQSFCPVTNERLLEINEISPEWAYSTETTKVVVIGNFYEQYKHLAGSAMFGVFGEQCVAGDIVQTGVYRFMVGPHTPGKVDFYLTLDGKTPISEICSFTYHVMHGSSLEARLPPSEDDYKRTNLKMQMRLARLLFATNKKKIAPKLLVEGTKVANLMSALPEKEWMDLWNILSDPEGTYVPVTESLLELVLRNRLQEWLVEMVMEGHKSTGRDDLGQGAIHLCSFLGYTWAIRLFSLSGFSLDFRDSSGWTALHWAAYHGRERMVATLLSAGANPSLVTDPTPESPAGLTAADLAARQGYDGLAAYLAEKGLTAHFEAMSLSKDTEQSPSKTRLTKLQSEKFEHLSEQELCLKESLAAYRNAADAASNIQAALRERTLKLQTKAIQLANPEIEASEIVAAMKIQHAFRNYNRKKAMRAAARIQSHFRTWKMRRNFINMRRQVIRIQAAYRGHQVRRQYRKVIWSVGIVEKAILRWRKKRKGLRGIASGMPVVMTVDAEAEPASTAEEDFFQAGRQQAEDRFNRSVVRVQALFRSYKAQQEYRRMKIAHEEAKIEFSEGQLGAACRS</sequence>